<reference key="1">
    <citation type="submission" date="2009-11" db="EMBL/GenBank/DDBJ databases">
        <authorList>
            <consortium name="Porcine genome sequencing project"/>
        </authorList>
    </citation>
    <scope>NUCLEOTIDE SEQUENCE [LARGE SCALE GENOMIC DNA]</scope>
    <source>
        <strain>Duroc</strain>
    </source>
</reference>
<reference key="2">
    <citation type="journal article" date="1985" name="Biochim. Biophys. Acta">
        <title>Purification of reconstitutively active alpha-oxoglutarate carrier from pig heart mitochondria.</title>
        <authorList>
            <person name="Bisaccia F."/>
            <person name="Indiveri C."/>
            <person name="Palmieri F."/>
        </authorList>
    </citation>
    <scope>FUNCTION</scope>
    <scope>TRANSPORT ACTIVITY</scope>
</reference>
<sequence length="333" mass="36777">MQSWDPCLTPLELHGALFLHGPYWTPGLFRLIALGTCGDSCTHVRQPPKTWMGATVFVQPLDLVKNRMQLSGEGAKTREYKTSFHALTSILRAEGLRGIYTGLSAGLLRQATYTTTRLGIYTVLFERLTGADGTPPGFLLKALIGMTAGATGAFVGTPAEVALIRMTADGRLPPDQRRGYKNVFDALIRIVREEGVPTLWRGCIPTMARAVVVNAAQLASYSQSKQFLLDSGYFSDNILCHFCASMISGLVTTAASMPVDIAKTRIQNMRTIDGKPEYKNGLDVLVKVIRYEGFFSLWKGFTPYYARLGPHTVLTFIFLEQMNKAYKRLFLSG</sequence>
<feature type="chain" id="PRO_0000456255" description="Mitochondrial 2-oxoglutarate/malate carrier protein">
    <location>
        <begin position="1"/>
        <end position="333"/>
    </location>
</feature>
<feature type="transmembrane region" description="Helical; Name=1" evidence="5">
    <location>
        <begin position="30"/>
        <end position="61"/>
    </location>
</feature>
<feature type="transmembrane region" description="Helical; Name=2" evidence="5">
    <location>
        <begin position="102"/>
        <end position="120"/>
    </location>
</feature>
<feature type="transmembrane region" description="Helical; Name=3" evidence="5">
    <location>
        <begin position="138"/>
        <end position="159"/>
    </location>
</feature>
<feature type="transmembrane region" description="Helical; Name=4" evidence="5">
    <location>
        <begin position="202"/>
        <end position="221"/>
    </location>
</feature>
<feature type="transmembrane region" description="Helical; Name=5" evidence="5">
    <location>
        <begin position="241"/>
        <end position="259"/>
    </location>
</feature>
<feature type="transmembrane region" description="Helical; Name=6" evidence="5">
    <location>
        <begin position="300"/>
        <end position="319"/>
    </location>
</feature>
<feature type="repeat" description="Solcar" evidence="6">
    <location>
        <begin position="29"/>
        <end position="127"/>
    </location>
</feature>
<feature type="repeat" description="Solcar" evidence="6">
    <location>
        <begin position="136"/>
        <end position="227"/>
    </location>
</feature>
<feature type="repeat" description="Solcar" evidence="6">
    <location>
        <begin position="236"/>
        <end position="325"/>
    </location>
</feature>
<keyword id="KW-0050">Antiport</keyword>
<keyword id="KW-0445">Lipid transport</keyword>
<keyword id="KW-0472">Membrane</keyword>
<keyword id="KW-1185">Reference proteome</keyword>
<keyword id="KW-0677">Repeat</keyword>
<keyword id="KW-0812">Transmembrane</keyword>
<keyword id="KW-1133">Transmembrane helix</keyword>
<keyword id="KW-0813">Transport</keyword>
<name>M2OM_PIG</name>
<dbReference type="EMBL" id="AEMK02000082">
    <property type="status" value="NOT_ANNOTATED_CDS"/>
    <property type="molecule type" value="Genomic_DNA"/>
</dbReference>
<dbReference type="SMR" id="F1RFX9"/>
<dbReference type="FunCoup" id="F1RFX9">
    <property type="interactions" value="1509"/>
</dbReference>
<dbReference type="STRING" id="9823.ENSSSCP00000018969"/>
<dbReference type="GlyGen" id="F1RFX9">
    <property type="glycosylation" value="1 site"/>
</dbReference>
<dbReference type="PeptideAtlas" id="F1RFX9"/>
<dbReference type="Ensembl" id="ENSSSCT00015089583.1">
    <property type="protein sequence ID" value="ENSSSCP00015036564.1"/>
    <property type="gene ID" value="ENSSSCG00015066676.1"/>
</dbReference>
<dbReference type="Ensembl" id="ENSSSCT00025017983.1">
    <property type="protein sequence ID" value="ENSSSCP00025007225.1"/>
    <property type="gene ID" value="ENSSSCG00025013482.1"/>
</dbReference>
<dbReference type="Ensembl" id="ENSSSCT00030100937.1">
    <property type="protein sequence ID" value="ENSSSCP00030046565.1"/>
    <property type="gene ID" value="ENSSSCG00030071955.1"/>
</dbReference>
<dbReference type="Ensembl" id="ENSSSCT00035042151.1">
    <property type="protein sequence ID" value="ENSSSCP00035016862.1"/>
    <property type="gene ID" value="ENSSSCG00035031819.1"/>
</dbReference>
<dbReference type="Ensembl" id="ENSSSCT00040011472.1">
    <property type="protein sequence ID" value="ENSSSCP00040004355.1"/>
    <property type="gene ID" value="ENSSSCG00040008800.1"/>
</dbReference>
<dbReference type="Ensembl" id="ENSSSCT00045025151.1">
    <property type="protein sequence ID" value="ENSSSCP00045017366.1"/>
    <property type="gene ID" value="ENSSSCG00045014722.1"/>
</dbReference>
<dbReference type="Ensembl" id="ENSSSCT00050026628.1">
    <property type="protein sequence ID" value="ENSSSCP00050011010.1"/>
    <property type="gene ID" value="ENSSSCG00050019725.1"/>
</dbReference>
<dbReference type="Ensembl" id="ENSSSCT00055038446.1">
    <property type="protein sequence ID" value="ENSSSCP00055030545.1"/>
    <property type="gene ID" value="ENSSSCG00055019375.1"/>
</dbReference>
<dbReference type="Ensembl" id="ENSSSCT00060062643.1">
    <property type="protein sequence ID" value="ENSSSCP00060026855.1"/>
    <property type="gene ID" value="ENSSSCG00060046157.1"/>
</dbReference>
<dbReference type="Ensembl" id="ENSSSCT00065061480.1">
    <property type="protein sequence ID" value="ENSSSCP00065026645.1"/>
    <property type="gene ID" value="ENSSSCG00065044910.1"/>
</dbReference>
<dbReference type="Ensembl" id="ENSSSCT00070039632.1">
    <property type="protein sequence ID" value="ENSSSCP00070033193.1"/>
    <property type="gene ID" value="ENSSSCG00070019978.1"/>
</dbReference>
<dbReference type="HOGENOM" id="CLU_015166_14_1_1"/>
<dbReference type="InParanoid" id="F1RFX9"/>
<dbReference type="TreeFam" id="TF354262"/>
<dbReference type="Reactome" id="R-SSC-428643">
    <property type="pathway name" value="Organic anion transporters"/>
</dbReference>
<dbReference type="Reactome" id="R-SSC-9856872">
    <property type="pathway name" value="Malate-aspartate shuttle"/>
</dbReference>
<dbReference type="Proteomes" id="UP000008227">
    <property type="component" value="Unplaced"/>
</dbReference>
<dbReference type="Proteomes" id="UP000314985">
    <property type="component" value="Chromosome 12"/>
</dbReference>
<dbReference type="Proteomes" id="UP000694570">
    <property type="component" value="Unplaced"/>
</dbReference>
<dbReference type="Proteomes" id="UP000694571">
    <property type="component" value="Unplaced"/>
</dbReference>
<dbReference type="Proteomes" id="UP000694720">
    <property type="component" value="Unplaced"/>
</dbReference>
<dbReference type="Proteomes" id="UP000694722">
    <property type="component" value="Unplaced"/>
</dbReference>
<dbReference type="Proteomes" id="UP000694723">
    <property type="component" value="Unplaced"/>
</dbReference>
<dbReference type="Proteomes" id="UP000694724">
    <property type="component" value="Unplaced"/>
</dbReference>
<dbReference type="Proteomes" id="UP000694725">
    <property type="component" value="Unplaced"/>
</dbReference>
<dbReference type="Proteomes" id="UP000694726">
    <property type="component" value="Unplaced"/>
</dbReference>
<dbReference type="Proteomes" id="UP000694727">
    <property type="component" value="Unplaced"/>
</dbReference>
<dbReference type="Proteomes" id="UP000694728">
    <property type="component" value="Unplaced"/>
</dbReference>
<dbReference type="Bgee" id="ENSSSCG00000032472">
    <property type="expression patterns" value="Expressed in psoas major muscle and 41 other cell types or tissues"/>
</dbReference>
<dbReference type="ExpressionAtlas" id="F1RFX9">
    <property type="expression patterns" value="baseline and differential"/>
</dbReference>
<dbReference type="GO" id="GO:0016020">
    <property type="term" value="C:membrane"/>
    <property type="evidence" value="ECO:0007669"/>
    <property type="project" value="UniProtKB-SubCell"/>
</dbReference>
<dbReference type="GO" id="GO:0015297">
    <property type="term" value="F:antiporter activity"/>
    <property type="evidence" value="ECO:0007669"/>
    <property type="project" value="UniProtKB-KW"/>
</dbReference>
<dbReference type="GO" id="GO:0022857">
    <property type="term" value="F:transmembrane transporter activity"/>
    <property type="evidence" value="ECO:0000318"/>
    <property type="project" value="GO_Central"/>
</dbReference>
<dbReference type="GO" id="GO:0006869">
    <property type="term" value="P:lipid transport"/>
    <property type="evidence" value="ECO:0007669"/>
    <property type="project" value="UniProtKB-KW"/>
</dbReference>
<dbReference type="FunFam" id="1.50.40.10:FF:000013">
    <property type="entry name" value="Mitochondrial 2-oxoglutarate/malate carrier protein-like protein"/>
    <property type="match status" value="1"/>
</dbReference>
<dbReference type="Gene3D" id="1.50.40.10">
    <property type="entry name" value="Mitochondrial carrier domain"/>
    <property type="match status" value="1"/>
</dbReference>
<dbReference type="InterPro" id="IPR002067">
    <property type="entry name" value="Mit_carrier"/>
</dbReference>
<dbReference type="InterPro" id="IPR050391">
    <property type="entry name" value="Mito_Metabolite_Transporter"/>
</dbReference>
<dbReference type="InterPro" id="IPR018108">
    <property type="entry name" value="Mitochondrial_sb/sol_carrier"/>
</dbReference>
<dbReference type="InterPro" id="IPR023395">
    <property type="entry name" value="Mt_carrier_dom_sf"/>
</dbReference>
<dbReference type="PANTHER" id="PTHR45618">
    <property type="entry name" value="MITOCHONDRIAL DICARBOXYLATE CARRIER-RELATED"/>
    <property type="match status" value="1"/>
</dbReference>
<dbReference type="Pfam" id="PF00153">
    <property type="entry name" value="Mito_carr"/>
    <property type="match status" value="3"/>
</dbReference>
<dbReference type="PRINTS" id="PR00784">
    <property type="entry name" value="MTUNCOUPLING"/>
</dbReference>
<dbReference type="SUPFAM" id="SSF103506">
    <property type="entry name" value="Mitochondrial carrier"/>
    <property type="match status" value="1"/>
</dbReference>
<dbReference type="PROSITE" id="PS50920">
    <property type="entry name" value="SOLCAR"/>
    <property type="match status" value="3"/>
</dbReference>
<proteinExistence type="inferred from homology"/>
<organism>
    <name type="scientific">Sus scrofa</name>
    <name type="common">Pig</name>
    <dbReference type="NCBI Taxonomy" id="9823"/>
    <lineage>
        <taxon>Eukaryota</taxon>
        <taxon>Metazoa</taxon>
        <taxon>Chordata</taxon>
        <taxon>Craniata</taxon>
        <taxon>Vertebrata</taxon>
        <taxon>Euteleostomi</taxon>
        <taxon>Mammalia</taxon>
        <taxon>Eutheria</taxon>
        <taxon>Laurasiatheria</taxon>
        <taxon>Artiodactyla</taxon>
        <taxon>Suina</taxon>
        <taxon>Suidae</taxon>
        <taxon>Sus</taxon>
    </lineage>
</organism>
<evidence type="ECO:0000250" key="1">
    <source>
        <dbReference type="UniProtKB" id="P22292"/>
    </source>
</evidence>
<evidence type="ECO:0000250" key="2">
    <source>
        <dbReference type="UniProtKB" id="P97700"/>
    </source>
</evidence>
<evidence type="ECO:0000250" key="3">
    <source>
        <dbReference type="UniProtKB" id="Q02978"/>
    </source>
</evidence>
<evidence type="ECO:0000250" key="4">
    <source>
        <dbReference type="UniProtKB" id="Q9CR62"/>
    </source>
</evidence>
<evidence type="ECO:0000255" key="5"/>
<evidence type="ECO:0000255" key="6">
    <source>
        <dbReference type="PROSITE-ProRule" id="PRU00282"/>
    </source>
</evidence>
<evidence type="ECO:0000269" key="7">
    <source>
    </source>
</evidence>
<evidence type="ECO:0000305" key="8"/>
<accession>F1RFX9</accession>
<protein>
    <recommendedName>
        <fullName>Mitochondrial 2-oxoglutarate/malate carrier protein</fullName>
        <shortName>OGCP</shortName>
        <shortName>alpha-oxoglutarate carrier</shortName>
    </recommendedName>
    <alternativeName>
        <fullName>Solute carrier family 25 member 11</fullName>
        <shortName>SLC25A11</shortName>
    </alternativeName>
</protein>
<gene>
    <name type="primary">SLC25A11</name>
</gene>
<comment type="function">
    <text evidence="1 2 3 4 7">Catalyzes the transport of 2-oxoglutarate (alpha-oxoglutarate) across the inner mitochondrial membrane in an electroneutral exchange for malate (PubMed:4063354). Can also exchange 2-oxoglutarate for other dicarboxylic acids such as malonate, succinate, maleate and oxaloacetate, although with lower affinity (PubMed:4063354). Contributes to several metabolic processes, including the malate-aspartate shuttle, the oxoglutarate/isocitrate shuttle, in gluconeogenesis from lactate, and in nitrogen metabolism (By similarity). Maintains mitochondrial fusion and fission events, and the organization and morphology of cristae (By similarity). Involved in the regulation of apoptosis (By similarity). Helps protect from cytotoxic-induced apoptosis by modulating glutathione levels in mitochondria (By similarity).</text>
</comment>
<comment type="catalytic activity">
    <reaction evidence="7">
        <text>(S)-malate(in) + 2-oxoglutarate(out) = (S)-malate(out) + 2-oxoglutarate(in)</text>
        <dbReference type="Rhea" id="RHEA:71587"/>
        <dbReference type="ChEBI" id="CHEBI:15589"/>
        <dbReference type="ChEBI" id="CHEBI:16810"/>
    </reaction>
</comment>
<comment type="catalytic activity">
    <reaction evidence="7">
        <text>malonate(in) + 2-oxoglutarate(out) = malonate(out) + 2-oxoglutarate(in)</text>
        <dbReference type="Rhea" id="RHEA:71591"/>
        <dbReference type="ChEBI" id="CHEBI:15792"/>
        <dbReference type="ChEBI" id="CHEBI:16810"/>
    </reaction>
</comment>
<comment type="catalytic activity">
    <reaction evidence="7">
        <text>succinate(in) + 2-oxoglutarate(out) = succinate(out) + 2-oxoglutarate(in)</text>
        <dbReference type="Rhea" id="RHEA:71595"/>
        <dbReference type="ChEBI" id="CHEBI:16810"/>
        <dbReference type="ChEBI" id="CHEBI:30031"/>
    </reaction>
</comment>
<comment type="catalytic activity">
    <reaction evidence="7">
        <text>maleate(in) + 2-oxoglutarate(out) = maleate(out) + 2-oxoglutarate(in)</text>
        <dbReference type="Rhea" id="RHEA:71599"/>
        <dbReference type="ChEBI" id="CHEBI:16810"/>
        <dbReference type="ChEBI" id="CHEBI:30780"/>
    </reaction>
</comment>
<comment type="catalytic activity">
    <reaction evidence="7">
        <text>oxaloacetate(in) + 2-oxoglutarate(out) = oxaloacetate(out) + 2-oxoglutarate(in)</text>
        <dbReference type="Rhea" id="RHEA:71603"/>
        <dbReference type="ChEBI" id="CHEBI:16452"/>
        <dbReference type="ChEBI" id="CHEBI:16810"/>
    </reaction>
</comment>
<comment type="subunit">
    <text evidence="3">Interacts with SMIM26.</text>
</comment>
<comment type="subcellular location">
    <subcellularLocation>
        <location evidence="5">Membrane</location>
        <topology evidence="5">Multi-pass membrane protein</topology>
    </subcellularLocation>
</comment>
<comment type="similarity">
    <text evidence="8">Belongs to the mitochondrial carrier (TC 2.A.29) family.</text>
</comment>